<gene>
    <name evidence="1" type="primary">glpG</name>
    <name type="ordered locus">Ent638_3833</name>
</gene>
<evidence type="ECO:0000255" key="1">
    <source>
        <dbReference type="HAMAP-Rule" id="MF_01594"/>
    </source>
</evidence>
<proteinExistence type="inferred from homology"/>
<name>GLPG_ENT38</name>
<dbReference type="EC" id="3.4.21.105" evidence="1"/>
<dbReference type="EMBL" id="CP000653">
    <property type="protein sequence ID" value="ABP62488.1"/>
    <property type="molecule type" value="Genomic_DNA"/>
</dbReference>
<dbReference type="RefSeq" id="WP_015960793.1">
    <property type="nucleotide sequence ID" value="NC_009436.1"/>
</dbReference>
<dbReference type="SMR" id="A4WFK8"/>
<dbReference type="STRING" id="399742.Ent638_3833"/>
<dbReference type="MEROPS" id="S54.016"/>
<dbReference type="KEGG" id="ent:Ent638_3833"/>
<dbReference type="eggNOG" id="COG0705">
    <property type="taxonomic scope" value="Bacteria"/>
</dbReference>
<dbReference type="HOGENOM" id="CLU_058989_0_0_6"/>
<dbReference type="OrthoDB" id="9778341at2"/>
<dbReference type="Proteomes" id="UP000000230">
    <property type="component" value="Chromosome"/>
</dbReference>
<dbReference type="GO" id="GO:0005886">
    <property type="term" value="C:plasma membrane"/>
    <property type="evidence" value="ECO:0007669"/>
    <property type="project" value="UniProtKB-SubCell"/>
</dbReference>
<dbReference type="GO" id="GO:0004252">
    <property type="term" value="F:serine-type endopeptidase activity"/>
    <property type="evidence" value="ECO:0007669"/>
    <property type="project" value="UniProtKB-UniRule"/>
</dbReference>
<dbReference type="GO" id="GO:0006508">
    <property type="term" value="P:proteolysis"/>
    <property type="evidence" value="ECO:0007669"/>
    <property type="project" value="UniProtKB-UniRule"/>
</dbReference>
<dbReference type="FunFam" id="1.20.1540.10:FF:000003">
    <property type="entry name" value="Rhomboid protease GlpG"/>
    <property type="match status" value="1"/>
</dbReference>
<dbReference type="Gene3D" id="3.30.70.2350">
    <property type="match status" value="1"/>
</dbReference>
<dbReference type="Gene3D" id="1.20.1540.10">
    <property type="entry name" value="Rhomboid-like"/>
    <property type="match status" value="1"/>
</dbReference>
<dbReference type="HAMAP" id="MF_01594">
    <property type="entry name" value="Rhomboid_GlpG"/>
    <property type="match status" value="1"/>
</dbReference>
<dbReference type="InterPro" id="IPR038236">
    <property type="entry name" value="GlpG_N_sf"/>
</dbReference>
<dbReference type="InterPro" id="IPR022732">
    <property type="entry name" value="Peptidase_S54_GlpG_N"/>
</dbReference>
<dbReference type="InterPro" id="IPR022764">
    <property type="entry name" value="Peptidase_S54_rhomboid_dom"/>
</dbReference>
<dbReference type="InterPro" id="IPR035952">
    <property type="entry name" value="Rhomboid-like_sf"/>
</dbReference>
<dbReference type="InterPro" id="IPR023662">
    <property type="entry name" value="Rhomboid_protease_GlpG"/>
</dbReference>
<dbReference type="NCBIfam" id="NF008155">
    <property type="entry name" value="PRK10907.1"/>
    <property type="match status" value="1"/>
</dbReference>
<dbReference type="NCBIfam" id="TIGR04239">
    <property type="entry name" value="rhombo_GlpG"/>
    <property type="match status" value="1"/>
</dbReference>
<dbReference type="PANTHER" id="PTHR43066:SF26">
    <property type="entry name" value="RHOMBOID PROTEASE GLPG"/>
    <property type="match status" value="1"/>
</dbReference>
<dbReference type="PANTHER" id="PTHR43066">
    <property type="entry name" value="RHOMBOID-RELATED PROTEIN"/>
    <property type="match status" value="1"/>
</dbReference>
<dbReference type="Pfam" id="PF01694">
    <property type="entry name" value="Rhomboid"/>
    <property type="match status" value="1"/>
</dbReference>
<dbReference type="Pfam" id="PF12122">
    <property type="entry name" value="Rhomboid_N"/>
    <property type="match status" value="1"/>
</dbReference>
<dbReference type="SUPFAM" id="SSF144091">
    <property type="entry name" value="Rhomboid-like"/>
    <property type="match status" value="1"/>
</dbReference>
<comment type="function">
    <text evidence="1">Rhomboid-type serine protease that catalyzes intramembrane proteolysis.</text>
</comment>
<comment type="catalytic activity">
    <reaction evidence="1">
        <text>Cleaves type-1 transmembrane domains using a catalytic dyad composed of serine and histidine that are contributed by different transmembrane domains.</text>
        <dbReference type="EC" id="3.4.21.105"/>
    </reaction>
</comment>
<comment type="subcellular location">
    <subcellularLocation>
        <location evidence="1">Cell inner membrane</location>
        <topology evidence="1">Multi-pass membrane protein</topology>
    </subcellularLocation>
</comment>
<comment type="similarity">
    <text evidence="1">Belongs to the peptidase S54 family.</text>
</comment>
<accession>A4WFK8</accession>
<sequence length="276" mass="31007">MLMITSFTNPRVAQAFVDYMATQGVVLTLQQHTQTDVWLADESQAERVNAELARFLENPGDPRYLAASWTNGHMDSGLHYQRFPFFATVRERAGPFTLLLMAACILVFIIMNVVGDQRVMIALAWPYGPAVQYDVWRYFTHALMHFSVLHILFNLLWWWYLGGAVEKRLGSGKLIVITIISALLSGYVQHKFSGPWFGGLSGVVYALMGYAWLRGERDPESGIYMQRGLITFALLWLIAGWFDLFGMSIANGAHVTGLAVGLAMAFADTLNARKRT</sequence>
<organism>
    <name type="scientific">Enterobacter sp. (strain 638)</name>
    <dbReference type="NCBI Taxonomy" id="399742"/>
    <lineage>
        <taxon>Bacteria</taxon>
        <taxon>Pseudomonadati</taxon>
        <taxon>Pseudomonadota</taxon>
        <taxon>Gammaproteobacteria</taxon>
        <taxon>Enterobacterales</taxon>
        <taxon>Enterobacteriaceae</taxon>
        <taxon>Enterobacter</taxon>
    </lineage>
</organism>
<reference key="1">
    <citation type="journal article" date="2010" name="PLoS Genet.">
        <title>Genome sequence of the plant growth promoting endophytic bacterium Enterobacter sp. 638.</title>
        <authorList>
            <person name="Taghavi S."/>
            <person name="van der Lelie D."/>
            <person name="Hoffman A."/>
            <person name="Zhang Y.B."/>
            <person name="Walla M.D."/>
            <person name="Vangronsveld J."/>
            <person name="Newman L."/>
            <person name="Monchy S."/>
        </authorList>
    </citation>
    <scope>NUCLEOTIDE SEQUENCE [LARGE SCALE GENOMIC DNA]</scope>
    <source>
        <strain>638</strain>
    </source>
</reference>
<keyword id="KW-0997">Cell inner membrane</keyword>
<keyword id="KW-1003">Cell membrane</keyword>
<keyword id="KW-0378">Hydrolase</keyword>
<keyword id="KW-0472">Membrane</keyword>
<keyword id="KW-0645">Protease</keyword>
<keyword id="KW-0720">Serine protease</keyword>
<keyword id="KW-0812">Transmembrane</keyword>
<keyword id="KW-1133">Transmembrane helix</keyword>
<feature type="chain" id="PRO_0000321677" description="Rhomboid protease GlpG">
    <location>
        <begin position="1"/>
        <end position="276"/>
    </location>
</feature>
<feature type="transmembrane region" description="Helical" evidence="1">
    <location>
        <begin position="94"/>
        <end position="114"/>
    </location>
</feature>
<feature type="transmembrane region" description="Helical" evidence="1">
    <location>
        <begin position="142"/>
        <end position="162"/>
    </location>
</feature>
<feature type="transmembrane region" description="Helical" evidence="1">
    <location>
        <begin position="169"/>
        <end position="189"/>
    </location>
</feature>
<feature type="transmembrane region" description="Helical" evidence="1">
    <location>
        <begin position="192"/>
        <end position="212"/>
    </location>
</feature>
<feature type="transmembrane region" description="Helical" evidence="1">
    <location>
        <begin position="229"/>
        <end position="249"/>
    </location>
</feature>
<feature type="transmembrane region" description="Helical" evidence="1">
    <location>
        <begin position="250"/>
        <end position="270"/>
    </location>
</feature>
<feature type="active site" description="Nucleophile" evidence="1">
    <location>
        <position position="201"/>
    </location>
</feature>
<feature type="active site" evidence="1">
    <location>
        <position position="254"/>
    </location>
</feature>
<protein>
    <recommendedName>
        <fullName evidence="1">Rhomboid protease GlpG</fullName>
        <ecNumber evidence="1">3.4.21.105</ecNumber>
    </recommendedName>
    <alternativeName>
        <fullName evidence="1">Intramembrane serine protease</fullName>
    </alternativeName>
</protein>